<feature type="signal peptide">
    <location>
        <begin position="1"/>
        <end position="25"/>
    </location>
</feature>
<feature type="chain" id="PRO_0000025537" description="FKBP-type peptidyl-prolyl cis-trans isomerase FkpA">
    <location>
        <begin position="26"/>
        <end position="270"/>
    </location>
</feature>
<feature type="domain" description="PPIase FKBP-type" evidence="2">
    <location>
        <begin position="164"/>
        <end position="249"/>
    </location>
</feature>
<accession>P65764</accession>
<accession>Q8X880</accession>
<protein>
    <recommendedName>
        <fullName>FKBP-type peptidyl-prolyl cis-trans isomerase FkpA</fullName>
        <shortName>PPIase</shortName>
        <ecNumber>5.2.1.8</ecNumber>
    </recommendedName>
    <alternativeName>
        <fullName>Rotamase</fullName>
    </alternativeName>
</protein>
<sequence length="270" mass="28912">MKSLFKVTLLATTMAVALHAPITFAAEAAKPATTADSKAAFKNDDQKSAYALGASLGRYMENSLKEQEKLGIKLDKDQLIAGVQDAFADKSKLSDQEIEQTLQAFEARVKSSAQAKMEKDAADNEAKGKEYREKFAKEKGVKTSSTGLVYQVVEAGKGEAPKDSDTVVVNYKGTLIDGKEFDNSYTRGEPLSFRLDGVIPGWTEGLKNIKKGGKIKLVIPPELAYGKAGVPGIPPNSTLVFDVELLDVKPAPKADAKPEADAKAADSAKK</sequence>
<organism>
    <name type="scientific">Escherichia coli O6:H1 (strain CFT073 / ATCC 700928 / UPEC)</name>
    <dbReference type="NCBI Taxonomy" id="199310"/>
    <lineage>
        <taxon>Bacteria</taxon>
        <taxon>Pseudomonadati</taxon>
        <taxon>Pseudomonadota</taxon>
        <taxon>Gammaproteobacteria</taxon>
        <taxon>Enterobacterales</taxon>
        <taxon>Enterobacteriaceae</taxon>
        <taxon>Escherichia</taxon>
    </lineage>
</organism>
<proteinExistence type="inferred from homology"/>
<dbReference type="EC" id="5.2.1.8"/>
<dbReference type="EMBL" id="AE014075">
    <property type="protein sequence ID" value="AAN82559.1"/>
    <property type="molecule type" value="Genomic_DNA"/>
</dbReference>
<dbReference type="RefSeq" id="WP_000838261.1">
    <property type="nucleotide sequence ID" value="NZ_CP051263.1"/>
</dbReference>
<dbReference type="BMRB" id="P65764"/>
<dbReference type="SMR" id="P65764"/>
<dbReference type="STRING" id="199310.c4121"/>
<dbReference type="GeneID" id="93778651"/>
<dbReference type="KEGG" id="ecc:c4121"/>
<dbReference type="eggNOG" id="COG0545">
    <property type="taxonomic scope" value="Bacteria"/>
</dbReference>
<dbReference type="HOGENOM" id="CLU_013615_0_2_6"/>
<dbReference type="BioCyc" id="ECOL199310:C4121-MONOMER"/>
<dbReference type="Proteomes" id="UP000001410">
    <property type="component" value="Chromosome"/>
</dbReference>
<dbReference type="GO" id="GO:0042597">
    <property type="term" value="C:periplasmic space"/>
    <property type="evidence" value="ECO:0007669"/>
    <property type="project" value="UniProtKB-SubCell"/>
</dbReference>
<dbReference type="GO" id="GO:0003755">
    <property type="term" value="F:peptidyl-prolyl cis-trans isomerase activity"/>
    <property type="evidence" value="ECO:0007669"/>
    <property type="project" value="UniProtKB-KW"/>
</dbReference>
<dbReference type="GO" id="GO:0006457">
    <property type="term" value="P:protein folding"/>
    <property type="evidence" value="ECO:0007669"/>
    <property type="project" value="InterPro"/>
</dbReference>
<dbReference type="FunFam" id="1.10.287.460:FF:000002">
    <property type="entry name" value="Peptidyl-prolyl cis-trans isomerase"/>
    <property type="match status" value="1"/>
</dbReference>
<dbReference type="FunFam" id="3.10.50.40:FF:000004">
    <property type="entry name" value="Peptidyl-prolyl cis-trans isomerase"/>
    <property type="match status" value="1"/>
</dbReference>
<dbReference type="Gene3D" id="3.10.50.40">
    <property type="match status" value="1"/>
</dbReference>
<dbReference type="Gene3D" id="1.10.287.460">
    <property type="entry name" value="Peptidyl-prolyl cis-trans isomerase, FKBP-type, N-terminal domain"/>
    <property type="match status" value="1"/>
</dbReference>
<dbReference type="InterPro" id="IPR046357">
    <property type="entry name" value="PPIase_dom_sf"/>
</dbReference>
<dbReference type="InterPro" id="IPR001179">
    <property type="entry name" value="PPIase_FKBP_dom"/>
</dbReference>
<dbReference type="InterPro" id="IPR000774">
    <property type="entry name" value="PPIase_FKBP_N"/>
</dbReference>
<dbReference type="InterPro" id="IPR036944">
    <property type="entry name" value="PPIase_FKBP_N_sf"/>
</dbReference>
<dbReference type="NCBIfam" id="NF008150">
    <property type="entry name" value="PRK10902.1"/>
    <property type="match status" value="1"/>
</dbReference>
<dbReference type="PANTHER" id="PTHR43811:SF19">
    <property type="entry name" value="39 KDA FK506-BINDING NUCLEAR PROTEIN"/>
    <property type="match status" value="1"/>
</dbReference>
<dbReference type="PANTHER" id="PTHR43811">
    <property type="entry name" value="FKBP-TYPE PEPTIDYL-PROLYL CIS-TRANS ISOMERASE FKPA"/>
    <property type="match status" value="1"/>
</dbReference>
<dbReference type="Pfam" id="PF00254">
    <property type="entry name" value="FKBP_C"/>
    <property type="match status" value="1"/>
</dbReference>
<dbReference type="Pfam" id="PF01346">
    <property type="entry name" value="FKBP_N"/>
    <property type="match status" value="1"/>
</dbReference>
<dbReference type="SUPFAM" id="SSF54534">
    <property type="entry name" value="FKBP-like"/>
    <property type="match status" value="1"/>
</dbReference>
<dbReference type="PROSITE" id="PS50059">
    <property type="entry name" value="FKBP_PPIASE"/>
    <property type="match status" value="1"/>
</dbReference>
<reference key="1">
    <citation type="journal article" date="2002" name="Proc. Natl. Acad. Sci. U.S.A.">
        <title>Extensive mosaic structure revealed by the complete genome sequence of uropathogenic Escherichia coli.</title>
        <authorList>
            <person name="Welch R.A."/>
            <person name="Burland V."/>
            <person name="Plunkett G. III"/>
            <person name="Redford P."/>
            <person name="Roesch P."/>
            <person name="Rasko D."/>
            <person name="Buckles E.L."/>
            <person name="Liou S.-R."/>
            <person name="Boutin A."/>
            <person name="Hackett J."/>
            <person name="Stroud D."/>
            <person name="Mayhew G.F."/>
            <person name="Rose D.J."/>
            <person name="Zhou S."/>
            <person name="Schwartz D.C."/>
            <person name="Perna N.T."/>
            <person name="Mobley H.L.T."/>
            <person name="Donnenberg M.S."/>
            <person name="Blattner F.R."/>
        </authorList>
    </citation>
    <scope>NUCLEOTIDE SEQUENCE [LARGE SCALE GENOMIC DNA]</scope>
    <source>
        <strain>CFT073 / ATCC 700928 / UPEC</strain>
    </source>
</reference>
<gene>
    <name type="primary">fkpA</name>
    <name type="ordered locus">c4121</name>
</gene>
<evidence type="ECO:0000250" key="1"/>
<evidence type="ECO:0000255" key="2">
    <source>
        <dbReference type="PROSITE-ProRule" id="PRU00277"/>
    </source>
</evidence>
<evidence type="ECO:0000305" key="3"/>
<name>FKBA_ECOL6</name>
<comment type="function">
    <text>PPIases accelerate the folding of proteins. It catalyzes the cis-trans isomerization of proline imidic peptide bonds in oligopeptides.</text>
</comment>
<comment type="catalytic activity">
    <reaction>
        <text>[protein]-peptidylproline (omega=180) = [protein]-peptidylproline (omega=0)</text>
        <dbReference type="Rhea" id="RHEA:16237"/>
        <dbReference type="Rhea" id="RHEA-COMP:10747"/>
        <dbReference type="Rhea" id="RHEA-COMP:10748"/>
        <dbReference type="ChEBI" id="CHEBI:83833"/>
        <dbReference type="ChEBI" id="CHEBI:83834"/>
        <dbReference type="EC" id="5.2.1.8"/>
    </reaction>
</comment>
<comment type="subcellular location">
    <subcellularLocation>
        <location evidence="1">Periplasm</location>
    </subcellularLocation>
</comment>
<comment type="similarity">
    <text evidence="3">Belongs to the FKBP-type PPIase family.</text>
</comment>
<keyword id="KW-0413">Isomerase</keyword>
<keyword id="KW-0574">Periplasm</keyword>
<keyword id="KW-1185">Reference proteome</keyword>
<keyword id="KW-0697">Rotamase</keyword>
<keyword id="KW-0732">Signal</keyword>